<feature type="chain" id="PRO_0000424104" description="dTDP-4-dehydrorhamnose reductase">
    <location>
        <begin position="1"/>
        <end position="298"/>
    </location>
</feature>
<feature type="active site" description="Proton donor/acceptor" evidence="1">
    <location>
        <position position="124"/>
    </location>
</feature>
<feature type="binding site" evidence="1">
    <location>
        <begin position="10"/>
        <end position="12"/>
    </location>
    <ligand>
        <name>NADH</name>
        <dbReference type="ChEBI" id="CHEBI:57945"/>
    </ligand>
</feature>
<feature type="binding site" evidence="1">
    <location>
        <begin position="11"/>
        <end position="12"/>
    </location>
    <ligand>
        <name>NADPH</name>
        <dbReference type="ChEBI" id="CHEBI:57783"/>
    </ligand>
</feature>
<feature type="binding site" evidence="1">
    <location>
        <begin position="35"/>
        <end position="36"/>
    </location>
    <ligand>
        <name>NADH</name>
        <dbReference type="ChEBI" id="CHEBI:57945"/>
    </ligand>
</feature>
<feature type="binding site" evidence="1">
    <location>
        <begin position="35"/>
        <end position="36"/>
    </location>
    <ligand>
        <name>NADPH</name>
        <dbReference type="ChEBI" id="CHEBI:57783"/>
    </ligand>
</feature>
<feature type="binding site" evidence="1">
    <location>
        <begin position="59"/>
        <end position="61"/>
    </location>
    <ligand>
        <name>NADH</name>
        <dbReference type="ChEBI" id="CHEBI:57945"/>
    </ligand>
</feature>
<feature type="binding site" evidence="1">
    <location>
        <begin position="59"/>
        <end position="61"/>
    </location>
    <ligand>
        <name>NADPH</name>
        <dbReference type="ChEBI" id="CHEBI:57783"/>
    </ligand>
</feature>
<feature type="binding site" evidence="1">
    <location>
        <position position="98"/>
    </location>
    <ligand>
        <name>NADPH</name>
        <dbReference type="ChEBI" id="CHEBI:57783"/>
    </ligand>
</feature>
<feature type="binding site" evidence="1">
    <location>
        <begin position="100"/>
        <end position="101"/>
    </location>
    <ligand>
        <name>dTDP-beta-L-rhamnose</name>
        <dbReference type="ChEBI" id="CHEBI:57510"/>
    </ligand>
</feature>
<feature type="binding site" evidence="1">
    <location>
        <position position="124"/>
    </location>
    <ligand>
        <name>NADH</name>
        <dbReference type="ChEBI" id="CHEBI:57945"/>
    </ligand>
</feature>
<feature type="binding site" evidence="1">
    <location>
        <position position="124"/>
    </location>
    <ligand>
        <name>NADPH</name>
        <dbReference type="ChEBI" id="CHEBI:57783"/>
    </ligand>
</feature>
<feature type="binding site" evidence="1">
    <location>
        <position position="128"/>
    </location>
    <ligand>
        <name>NADH</name>
        <dbReference type="ChEBI" id="CHEBI:57945"/>
    </ligand>
</feature>
<feature type="binding site" evidence="1">
    <location>
        <position position="128"/>
    </location>
    <ligand>
        <name>NADPH</name>
        <dbReference type="ChEBI" id="CHEBI:57783"/>
    </ligand>
</feature>
<feature type="binding site" evidence="1">
    <location>
        <position position="149"/>
    </location>
    <ligand>
        <name>dTDP-beta-L-rhamnose</name>
        <dbReference type="ChEBI" id="CHEBI:57510"/>
    </ligand>
</feature>
<feature type="site" description="Could provide a fine-tuning to achieve optimal pKa matching between active site and substrate" evidence="1">
    <location>
        <position position="100"/>
    </location>
</feature>
<proteinExistence type="evidence at protein level"/>
<gene>
    <name evidence="3" type="primary">rmlD</name>
    <name type="synonym">rfbD</name>
    <name type="ordered locus">BTH_I1472</name>
</gene>
<dbReference type="EC" id="1.1.1.133" evidence="5"/>
<dbReference type="EMBL" id="CP000086">
    <property type="protein sequence ID" value="ABC37745.1"/>
    <property type="molecule type" value="Genomic_DNA"/>
</dbReference>
<dbReference type="RefSeq" id="WP_009889586.1">
    <property type="nucleotide sequence ID" value="NZ_CP008785.1"/>
</dbReference>
<dbReference type="SMR" id="Q2SYI1"/>
<dbReference type="GeneID" id="45121213"/>
<dbReference type="KEGG" id="bte:BTH_I1472"/>
<dbReference type="HOGENOM" id="CLU_045518_1_0_4"/>
<dbReference type="UniPathway" id="UPA00124"/>
<dbReference type="UniPathway" id="UPA00281"/>
<dbReference type="Proteomes" id="UP000001930">
    <property type="component" value="Chromosome I"/>
</dbReference>
<dbReference type="GO" id="GO:0005829">
    <property type="term" value="C:cytosol"/>
    <property type="evidence" value="ECO:0007669"/>
    <property type="project" value="TreeGrafter"/>
</dbReference>
<dbReference type="GO" id="GO:0008831">
    <property type="term" value="F:dTDP-4-dehydrorhamnose reductase activity"/>
    <property type="evidence" value="ECO:0007669"/>
    <property type="project" value="UniProtKB-EC"/>
</dbReference>
<dbReference type="GO" id="GO:0046872">
    <property type="term" value="F:metal ion binding"/>
    <property type="evidence" value="ECO:0007669"/>
    <property type="project" value="UniProtKB-KW"/>
</dbReference>
<dbReference type="GO" id="GO:0019305">
    <property type="term" value="P:dTDP-rhamnose biosynthetic process"/>
    <property type="evidence" value="ECO:0007669"/>
    <property type="project" value="UniProtKB-UniPathway"/>
</dbReference>
<dbReference type="GO" id="GO:0009243">
    <property type="term" value="P:O antigen biosynthetic process"/>
    <property type="evidence" value="ECO:0007669"/>
    <property type="project" value="UniProtKB-UniPathway"/>
</dbReference>
<dbReference type="CDD" id="cd05254">
    <property type="entry name" value="dTDP_HR_like_SDR_e"/>
    <property type="match status" value="1"/>
</dbReference>
<dbReference type="Gene3D" id="3.40.50.720">
    <property type="entry name" value="NAD(P)-binding Rossmann-like Domain"/>
    <property type="match status" value="1"/>
</dbReference>
<dbReference type="Gene3D" id="3.90.25.10">
    <property type="entry name" value="UDP-galactose 4-epimerase, domain 1"/>
    <property type="match status" value="1"/>
</dbReference>
<dbReference type="InterPro" id="IPR005913">
    <property type="entry name" value="dTDP_dehydrorham_reduct"/>
</dbReference>
<dbReference type="InterPro" id="IPR036291">
    <property type="entry name" value="NAD(P)-bd_dom_sf"/>
</dbReference>
<dbReference type="InterPro" id="IPR029903">
    <property type="entry name" value="RmlD-like-bd"/>
</dbReference>
<dbReference type="NCBIfam" id="TIGR01214">
    <property type="entry name" value="rmlD"/>
    <property type="match status" value="1"/>
</dbReference>
<dbReference type="PANTHER" id="PTHR10491">
    <property type="entry name" value="DTDP-4-DEHYDRORHAMNOSE REDUCTASE"/>
    <property type="match status" value="1"/>
</dbReference>
<dbReference type="PANTHER" id="PTHR10491:SF4">
    <property type="entry name" value="METHIONINE ADENOSYLTRANSFERASE 2 SUBUNIT BETA"/>
    <property type="match status" value="1"/>
</dbReference>
<dbReference type="Pfam" id="PF04321">
    <property type="entry name" value="RmlD_sub_bind"/>
    <property type="match status" value="1"/>
</dbReference>
<dbReference type="SUPFAM" id="SSF51735">
    <property type="entry name" value="NAD(P)-binding Rossmann-fold domains"/>
    <property type="match status" value="1"/>
</dbReference>
<name>RMLD_BURTA</name>
<sequence>MKILVTGANGQVGWELARSLAVLGQVVPLARDEADLGRPETLARIVEDAKPDVVVNAAAYTAVDAAESDGAAAKVVNGEAVGVLAAATKRVGGLFVHYSTDYVFDGTKSSPYIETDPTCPVNAYGASKLLGELAVAETGGDWLTFRTTWVFAARGKNFLRTMLRLAKEREEMKIVADQFGAPTWARSIADGTAHALATAMRERAAGAFTSGVYHMTSAGQTSWHGFADAIVASWRAVPGAAPLAVSRIVPIPTSAYPVPARRPANSVLSNEALKERFGIELPDWRYAVGLCVRDLLSQ</sequence>
<organism>
    <name type="scientific">Burkholderia thailandensis (strain ATCC 700388 / DSM 13276 / CCUG 48851 / CIP 106301 / E264)</name>
    <dbReference type="NCBI Taxonomy" id="271848"/>
    <lineage>
        <taxon>Bacteria</taxon>
        <taxon>Pseudomonadati</taxon>
        <taxon>Pseudomonadota</taxon>
        <taxon>Betaproteobacteria</taxon>
        <taxon>Burkholderiales</taxon>
        <taxon>Burkholderiaceae</taxon>
        <taxon>Burkholderia</taxon>
        <taxon>pseudomallei group</taxon>
    </lineage>
</organism>
<keyword id="KW-0119">Carbohydrate metabolism</keyword>
<keyword id="KW-0448">Lipopolysaccharide biosynthesis</keyword>
<keyword id="KW-0460">Magnesium</keyword>
<keyword id="KW-0479">Metal-binding</keyword>
<keyword id="KW-0520">NAD</keyword>
<keyword id="KW-0521">NADP</keyword>
<keyword id="KW-0560">Oxidoreductase</keyword>
<accession>Q2SYI1</accession>
<protein>
    <recommendedName>
        <fullName evidence="1">dTDP-4-dehydrorhamnose reductase</fullName>
        <ecNumber evidence="5">1.1.1.133</ecNumber>
    </recommendedName>
    <alternativeName>
        <fullName evidence="1">dTDP-4-keto-L-rhamnose reductase</fullName>
    </alternativeName>
    <alternativeName>
        <fullName evidence="3">dTDP-6-deoxy-L-lyxo-4-hexulose reductase</fullName>
    </alternativeName>
    <alternativeName>
        <fullName evidence="1">dTDP-6-deoxy-L-mannose dehydrogenase</fullName>
    </alternativeName>
    <alternativeName>
        <fullName evidence="1">dTDP-L-rhamnose synthase</fullName>
    </alternativeName>
</protein>
<evidence type="ECO:0000250" key="1">
    <source>
        <dbReference type="UniProtKB" id="P26392"/>
    </source>
</evidence>
<evidence type="ECO:0000269" key="2">
    <source>
    </source>
</evidence>
<evidence type="ECO:0000303" key="3">
    <source>
    </source>
</evidence>
<evidence type="ECO:0000305" key="4"/>
<evidence type="ECO:0000305" key="5">
    <source>
    </source>
</evidence>
<reference key="1">
    <citation type="journal article" date="2005" name="BMC Genomics">
        <title>Bacterial genome adaptation to niches: divergence of the potential virulence genes in three Burkholderia species of different survival strategies.</title>
        <authorList>
            <person name="Kim H.S."/>
            <person name="Schell M.A."/>
            <person name="Yu Y."/>
            <person name="Ulrich R.L."/>
            <person name="Sarria S.H."/>
            <person name="Nierman W.C."/>
            <person name="DeShazer D."/>
        </authorList>
    </citation>
    <scope>NUCLEOTIDE SEQUENCE [LARGE SCALE GENOMIC DNA]</scope>
    <source>
        <strain>ATCC 700388 / DSM 13276 / CCUG 48851 / CIP 106301 / E264</strain>
    </source>
</reference>
<reference key="2">
    <citation type="journal article" date="2011" name="Bioorg. Med. Chem. Lett.">
        <title>A new route to dTDP-6-deoxy-l-talose and dTDP-L-rhamnose: dTDP-L-rhamnose 4-epimerase in Burkholderia thailandensis.</title>
        <authorList>
            <person name="Yoo H.G."/>
            <person name="Kwon S.Y."/>
            <person name="Karki S."/>
            <person name="Kwon H.J."/>
        </authorList>
    </citation>
    <scope>FUNCTION</scope>
    <scope>CATALYTIC ACTIVITY</scope>
    <scope>PATHWAY</scope>
    <source>
        <strain>ATCC 700388 / DSM 13276 / CCUG 48851 / CIP 106301 / E264</strain>
    </source>
</reference>
<comment type="function">
    <text evidence="2">Involved in the biosynthesis of the dTDP-L-rhamnose which is an important component of lipopolysaccharide (LPS). Catalyzes the reduction of dTDP-6-deoxy-L-lyxo-4-hexulose to yield dTDP-L-rhamnose.</text>
</comment>
<comment type="catalytic activity">
    <reaction evidence="5">
        <text>dTDP-beta-L-rhamnose + NADP(+) = dTDP-4-dehydro-beta-L-rhamnose + NADPH + H(+)</text>
        <dbReference type="Rhea" id="RHEA:21796"/>
        <dbReference type="ChEBI" id="CHEBI:15378"/>
        <dbReference type="ChEBI" id="CHEBI:57510"/>
        <dbReference type="ChEBI" id="CHEBI:57783"/>
        <dbReference type="ChEBI" id="CHEBI:58349"/>
        <dbReference type="ChEBI" id="CHEBI:62830"/>
        <dbReference type="EC" id="1.1.1.133"/>
    </reaction>
</comment>
<comment type="cofactor">
    <cofactor evidence="1">
        <name>Mg(2+)</name>
        <dbReference type="ChEBI" id="CHEBI:18420"/>
    </cofactor>
    <text evidence="1">Binds 1 Mg(2+) ion per monomer.</text>
</comment>
<comment type="pathway">
    <text evidence="2">Carbohydrate biosynthesis; dTDP-L-rhamnose biosynthesis.</text>
</comment>
<comment type="pathway">
    <text evidence="2">Bacterial outer membrane biogenesis; LPS O-antigen biosynthesis.</text>
</comment>
<comment type="subunit">
    <text evidence="1">Homodimer.</text>
</comment>
<comment type="similarity">
    <text evidence="4">Belongs to the dTDP-4-dehydrorhamnose reductase family.</text>
</comment>